<evidence type="ECO:0000250" key="1"/>
<evidence type="ECO:0000256" key="2">
    <source>
        <dbReference type="SAM" id="MobiDB-lite"/>
    </source>
</evidence>
<evidence type="ECO:0000305" key="3"/>
<protein>
    <recommendedName>
        <fullName>DNA-directed RNA polymerase III subunit RPC3</fullName>
        <shortName>RNA polymerase III subunit C3</shortName>
    </recommendedName>
    <alternativeName>
        <fullName>DNA-directed RNA polymerase III subunit C</fullName>
    </alternativeName>
</protein>
<dbReference type="EMBL" id="BC046092">
    <property type="protein sequence ID" value="AAH46092.1"/>
    <property type="molecule type" value="mRNA"/>
</dbReference>
<dbReference type="RefSeq" id="NP_956526.1">
    <property type="nucleotide sequence ID" value="NM_200232.1"/>
</dbReference>
<dbReference type="SMR" id="Q7ZUX1"/>
<dbReference type="FunCoup" id="Q7ZUX1">
    <property type="interactions" value="2753"/>
</dbReference>
<dbReference type="STRING" id="7955.ENSDARP00000059966"/>
<dbReference type="PaxDb" id="7955-ENSDARP00000059966"/>
<dbReference type="GeneID" id="393201"/>
<dbReference type="KEGG" id="dre:393201"/>
<dbReference type="AGR" id="ZFIN:ZDB-GENE-040426-992"/>
<dbReference type="CTD" id="10623"/>
<dbReference type="ZFIN" id="ZDB-GENE-040426-992">
    <property type="gene designation" value="polr3c"/>
</dbReference>
<dbReference type="eggNOG" id="KOG2587">
    <property type="taxonomic scope" value="Eukaryota"/>
</dbReference>
<dbReference type="InParanoid" id="Q7ZUX1"/>
<dbReference type="OrthoDB" id="272392at2759"/>
<dbReference type="PhylomeDB" id="Q7ZUX1"/>
<dbReference type="PRO" id="PR:Q7ZUX1"/>
<dbReference type="Proteomes" id="UP000000437">
    <property type="component" value="Chromosome 16"/>
</dbReference>
<dbReference type="GO" id="GO:0005666">
    <property type="term" value="C:RNA polymerase III complex"/>
    <property type="evidence" value="ECO:0000318"/>
    <property type="project" value="GO_Central"/>
</dbReference>
<dbReference type="GO" id="GO:0003697">
    <property type="term" value="F:single-stranded DNA binding"/>
    <property type="evidence" value="ECO:0007669"/>
    <property type="project" value="InterPro"/>
</dbReference>
<dbReference type="GO" id="GO:0006351">
    <property type="term" value="P:DNA-templated transcription"/>
    <property type="evidence" value="ECO:0007669"/>
    <property type="project" value="InterPro"/>
</dbReference>
<dbReference type="FunFam" id="1.10.10.10:FF:000199">
    <property type="entry name" value="DNA-directed RNA polymerase III subunit RPC3"/>
    <property type="match status" value="1"/>
</dbReference>
<dbReference type="FunFam" id="1.10.10.10:FF:000218">
    <property type="entry name" value="DNA-directed RNA polymerase III subunit RPC3"/>
    <property type="match status" value="1"/>
</dbReference>
<dbReference type="FunFam" id="1.10.10.10:FF:000256">
    <property type="entry name" value="DNA-directed RNA polymerase III subunit RPC3"/>
    <property type="match status" value="1"/>
</dbReference>
<dbReference type="FunFam" id="1.10.10.10:FF:000262">
    <property type="entry name" value="DNA-directed RNA polymerase III subunit RPC3"/>
    <property type="match status" value="1"/>
</dbReference>
<dbReference type="Gene3D" id="6.10.140.1450">
    <property type="match status" value="1"/>
</dbReference>
<dbReference type="Gene3D" id="1.10.10.10">
    <property type="entry name" value="Winged helix-like DNA-binding domain superfamily/Winged helix DNA-binding domain"/>
    <property type="match status" value="4"/>
</dbReference>
<dbReference type="InterPro" id="IPR055207">
    <property type="entry name" value="POLR3C_WHD"/>
</dbReference>
<dbReference type="InterPro" id="IPR013197">
    <property type="entry name" value="RNA_pol_III_RPC82-rel_HTH"/>
</dbReference>
<dbReference type="InterPro" id="IPR008806">
    <property type="entry name" value="RNA_pol_III_Rpc82_C"/>
</dbReference>
<dbReference type="InterPro" id="IPR039748">
    <property type="entry name" value="RPC3"/>
</dbReference>
<dbReference type="InterPro" id="IPR036388">
    <property type="entry name" value="WH-like_DNA-bd_sf"/>
</dbReference>
<dbReference type="PANTHER" id="PTHR12949:SF0">
    <property type="entry name" value="DNA-DIRECTED RNA POLYMERASE III SUBUNIT RPC3"/>
    <property type="match status" value="1"/>
</dbReference>
<dbReference type="PANTHER" id="PTHR12949">
    <property type="entry name" value="RNA POLYMERASE III DNA DIRECTED -RELATED"/>
    <property type="match status" value="1"/>
</dbReference>
<dbReference type="Pfam" id="PF08221">
    <property type="entry name" value="HTH_9"/>
    <property type="match status" value="1"/>
</dbReference>
<dbReference type="Pfam" id="PF22536">
    <property type="entry name" value="POLR3C_WHD"/>
    <property type="match status" value="1"/>
</dbReference>
<dbReference type="Pfam" id="PF05645">
    <property type="entry name" value="RNA_pol_Rpc82"/>
    <property type="match status" value="1"/>
</dbReference>
<dbReference type="Pfam" id="PF20912">
    <property type="entry name" value="RPC3_helical"/>
    <property type="match status" value="1"/>
</dbReference>
<name>RPC3_DANRE</name>
<keyword id="KW-0240">DNA-directed RNA polymerase</keyword>
<keyword id="KW-0539">Nucleus</keyword>
<keyword id="KW-1185">Reference proteome</keyword>
<keyword id="KW-0804">Transcription</keyword>
<organism>
    <name type="scientific">Danio rerio</name>
    <name type="common">Zebrafish</name>
    <name type="synonym">Brachydanio rerio</name>
    <dbReference type="NCBI Taxonomy" id="7955"/>
    <lineage>
        <taxon>Eukaryota</taxon>
        <taxon>Metazoa</taxon>
        <taxon>Chordata</taxon>
        <taxon>Craniata</taxon>
        <taxon>Vertebrata</taxon>
        <taxon>Euteleostomi</taxon>
        <taxon>Actinopterygii</taxon>
        <taxon>Neopterygii</taxon>
        <taxon>Teleostei</taxon>
        <taxon>Ostariophysi</taxon>
        <taxon>Cypriniformes</taxon>
        <taxon>Danionidae</taxon>
        <taxon>Danioninae</taxon>
        <taxon>Danio</taxon>
    </lineage>
</organism>
<comment type="function">
    <text evidence="1">DNA-dependent RNA polymerase catalyzes the transcription of DNA into RNA using the four ribonucleoside triphosphates as substrates. Specific core component of RNA polymerase III which synthesizes small RNAs, such as 5S rRNA and tRNAs (By similarity).</text>
</comment>
<comment type="subunit">
    <text evidence="1">Component of the RNA polymerase III (Pol III) complex consisting of 17 subunits.</text>
</comment>
<comment type="subcellular location">
    <subcellularLocation>
        <location evidence="3">Nucleus</location>
    </subcellularLocation>
</comment>
<comment type="similarity">
    <text evidence="3">Belongs to the eukaryotic RPC3/POLR3C RNA polymerase subunit family.</text>
</comment>
<feature type="chain" id="PRO_0000073965" description="DNA-directed RNA polymerase III subunit RPC3">
    <location>
        <begin position="1"/>
        <end position="539"/>
    </location>
</feature>
<feature type="region of interest" description="Disordered" evidence="2">
    <location>
        <begin position="165"/>
        <end position="234"/>
    </location>
</feature>
<feature type="compositionally biased region" description="Low complexity" evidence="2">
    <location>
        <begin position="167"/>
        <end position="179"/>
    </location>
</feature>
<feature type="compositionally biased region" description="Basic and acidic residues" evidence="2">
    <location>
        <begin position="212"/>
        <end position="230"/>
    </location>
</feature>
<reference key="1">
    <citation type="submission" date="2003-01" db="EMBL/GenBank/DDBJ databases">
        <authorList>
            <consortium name="NIH - Zebrafish Gene Collection (ZGC) project"/>
        </authorList>
    </citation>
    <scope>NUCLEOTIDE SEQUENCE [LARGE SCALE MRNA]</scope>
</reference>
<proteinExistence type="evidence at transcript level"/>
<accession>Q7ZUX1</accession>
<gene>
    <name type="primary">polr3c</name>
    <name type="ORF">zgc:56348</name>
</gene>
<sequence>MTAQEVRLCGLLLQEHFGDVVENVGTHLIRNGVLTLRALAHETKLALDLVKKSLCVLVQHGMCTFGPGRRGPAGPVEYHINCEHILHMLRYPRYIYTAKSLYGDTGELIVEEILQRGQMTMSSTVKTVADRLTHNMPEGQSMDYNEVVSAFSRLVETHFLQRCPPMASAESSGTGSAETPPAVTQPSNPESHPDCYKLPYISLSGHGKRRRSSEDGEADQRAAKKAKTDSSECGDEGIHWQVNFERFHLHFRDQAIISAVSCKLDQTSGEIVRTMLRMSEVTTSANAAFTQALSANEIFRALPSNYNIARPILDQYLTLLVDDPMEFVGKAGDSGGGMFVVNLHRALANLARATLESVVQERFGSRSARIFRLLLRKRHLEQKQVEDFAMIPAKEAKEMLYTLLSENLVQLQEIPKTPDHAPSRTFYLYAVNQLPTARLLLQHCYKTVGNLIERRLYETKENKRLLEKSQRIEAILASLQATGAEATQLTEVEEMITAPERQQLESLRHHINKLDSGENQVDETIFLLESYINSTQASR</sequence>